<organism>
    <name type="scientific">Helicobacter pylori (strain B128)</name>
    <dbReference type="NCBI Taxonomy" id="544406"/>
    <lineage>
        <taxon>Bacteria</taxon>
        <taxon>Pseudomonadati</taxon>
        <taxon>Campylobacterota</taxon>
        <taxon>Epsilonproteobacteria</taxon>
        <taxon>Campylobacterales</taxon>
        <taxon>Helicobacteraceae</taxon>
        <taxon>Helicobacter</taxon>
    </lineage>
</organism>
<dbReference type="EC" id="3.1.-.-" evidence="1 4"/>
<dbReference type="EMBL" id="ABSY01000006">
    <property type="protein sequence ID" value="EEC24876.1"/>
    <property type="molecule type" value="Genomic_DNA"/>
</dbReference>
<dbReference type="RefSeq" id="WP_000131608.1">
    <property type="nucleotide sequence ID" value="NZ_CP024951.1"/>
</dbReference>
<dbReference type="PDB" id="8CGL">
    <property type="method" value="EM"/>
    <property type="resolution" value="4.10 A"/>
    <property type="chains" value="A/B/C/D=2-691"/>
</dbReference>
<dbReference type="PDBsum" id="8CGL"/>
<dbReference type="EMDB" id="EMD-16647"/>
<dbReference type="SMR" id="B9XZG7"/>
<dbReference type="GO" id="GO:0005737">
    <property type="term" value="C:cytoplasm"/>
    <property type="evidence" value="ECO:0000314"/>
    <property type="project" value="UniProtKB"/>
</dbReference>
<dbReference type="GO" id="GO:0004534">
    <property type="term" value="F:5'-3' RNA exonuclease activity"/>
    <property type="evidence" value="ECO:0000314"/>
    <property type="project" value="UniProtKB"/>
</dbReference>
<dbReference type="GO" id="GO:0042802">
    <property type="term" value="F:identical protein binding"/>
    <property type="evidence" value="ECO:0000314"/>
    <property type="project" value="UniProtKB"/>
</dbReference>
<dbReference type="GO" id="GO:0042803">
    <property type="term" value="F:protein homodimerization activity"/>
    <property type="evidence" value="ECO:0000314"/>
    <property type="project" value="UniProtKB"/>
</dbReference>
<dbReference type="GO" id="GO:0003723">
    <property type="term" value="F:RNA binding"/>
    <property type="evidence" value="ECO:0007669"/>
    <property type="project" value="UniProtKB-UniRule"/>
</dbReference>
<dbReference type="GO" id="GO:0004521">
    <property type="term" value="F:RNA endonuclease activity"/>
    <property type="evidence" value="ECO:0000314"/>
    <property type="project" value="UniProtKB"/>
</dbReference>
<dbReference type="GO" id="GO:0008270">
    <property type="term" value="F:zinc ion binding"/>
    <property type="evidence" value="ECO:0007669"/>
    <property type="project" value="InterPro"/>
</dbReference>
<dbReference type="GO" id="GO:0006397">
    <property type="term" value="P:mRNA processing"/>
    <property type="evidence" value="ECO:0007669"/>
    <property type="project" value="UniProtKB-KW"/>
</dbReference>
<dbReference type="GO" id="GO:0051289">
    <property type="term" value="P:protein homotetramerization"/>
    <property type="evidence" value="ECO:0000314"/>
    <property type="project" value="UniProtKB"/>
</dbReference>
<dbReference type="GO" id="GO:0001558">
    <property type="term" value="P:regulation of cell growth"/>
    <property type="evidence" value="ECO:0000315"/>
    <property type="project" value="UniProtKB"/>
</dbReference>
<dbReference type="GO" id="GO:0006364">
    <property type="term" value="P:rRNA processing"/>
    <property type="evidence" value="ECO:0007669"/>
    <property type="project" value="UniProtKB-UniRule"/>
</dbReference>
<dbReference type="CDD" id="cd07714">
    <property type="entry name" value="RNaseJ_MBL-fold"/>
    <property type="match status" value="1"/>
</dbReference>
<dbReference type="Gene3D" id="3.10.20.580">
    <property type="match status" value="1"/>
</dbReference>
<dbReference type="Gene3D" id="3.40.50.10710">
    <property type="entry name" value="Metallo-hydrolase/oxidoreductase"/>
    <property type="match status" value="1"/>
</dbReference>
<dbReference type="Gene3D" id="3.60.15.10">
    <property type="entry name" value="Ribonuclease Z/Hydroxyacylglutathione hydrolase-like"/>
    <property type="match status" value="1"/>
</dbReference>
<dbReference type="HAMAP" id="MF_01491">
    <property type="entry name" value="RNase_J_bact"/>
    <property type="match status" value="1"/>
</dbReference>
<dbReference type="InterPro" id="IPR001279">
    <property type="entry name" value="Metallo-B-lactamas"/>
</dbReference>
<dbReference type="InterPro" id="IPR036866">
    <property type="entry name" value="RibonucZ/Hydroxyglut_hydro"/>
</dbReference>
<dbReference type="InterPro" id="IPR011108">
    <property type="entry name" value="RMMBL"/>
</dbReference>
<dbReference type="InterPro" id="IPR004613">
    <property type="entry name" value="RNase_J"/>
</dbReference>
<dbReference type="InterPro" id="IPR042173">
    <property type="entry name" value="RNase_J_2"/>
</dbReference>
<dbReference type="InterPro" id="IPR055132">
    <property type="entry name" value="RNase_J_b_CASP"/>
</dbReference>
<dbReference type="InterPro" id="IPR030854">
    <property type="entry name" value="RNase_J_bac"/>
</dbReference>
<dbReference type="InterPro" id="IPR041636">
    <property type="entry name" value="RNase_J_C"/>
</dbReference>
<dbReference type="InterPro" id="IPR001587">
    <property type="entry name" value="RNase_J_CS"/>
</dbReference>
<dbReference type="NCBIfam" id="TIGR00649">
    <property type="entry name" value="MG423"/>
    <property type="match status" value="1"/>
</dbReference>
<dbReference type="PANTHER" id="PTHR43694">
    <property type="entry name" value="RIBONUCLEASE J"/>
    <property type="match status" value="1"/>
</dbReference>
<dbReference type="PANTHER" id="PTHR43694:SF1">
    <property type="entry name" value="RIBONUCLEASE J"/>
    <property type="match status" value="1"/>
</dbReference>
<dbReference type="Pfam" id="PF00753">
    <property type="entry name" value="Lactamase_B"/>
    <property type="match status" value="1"/>
</dbReference>
<dbReference type="Pfam" id="PF07521">
    <property type="entry name" value="RMMBL"/>
    <property type="match status" value="1"/>
</dbReference>
<dbReference type="Pfam" id="PF22505">
    <property type="entry name" value="RNase_J_b_CASP"/>
    <property type="match status" value="1"/>
</dbReference>
<dbReference type="Pfam" id="PF17770">
    <property type="entry name" value="RNase_J_C"/>
    <property type="match status" value="1"/>
</dbReference>
<dbReference type="SMART" id="SM00849">
    <property type="entry name" value="Lactamase_B"/>
    <property type="match status" value="1"/>
</dbReference>
<dbReference type="SUPFAM" id="SSF56281">
    <property type="entry name" value="Metallo-hydrolase/oxidoreductase"/>
    <property type="match status" value="1"/>
</dbReference>
<dbReference type="PROSITE" id="PS01292">
    <property type="entry name" value="UPF0036"/>
    <property type="match status" value="1"/>
</dbReference>
<sequence length="691" mass="77608">MTDNNHYENNESNENSSENSKVDEARAGAFERFTNRKKRFRENAQKNGESSHHEAPSHHKKEHRPNKKPNNHHKQKHAKTRNYAKEELDSNKVEGVTEILHVNERGTLGFHKELKKGVETNNKIQVEHLNPHYKMNLNSKASVKITPLGGLGEIGGNMMVIETPKSAIVIDAGMSFPKEGLFGVDILIPDFSYLHQIKDKIAGIIITHAHEDHIGATPYLFKELQFPLYGTPLSLGLIGSKFDEHGLKKYRSYFKIVEKRCPISVGEFIIEWIHITHSIIDSSALAIQTKAGTIIHTGDFKIDHTPVDNLPTDLYRLAHYGEKGVMLLLSDSTNSHKSGTTPSESTIAPAFDTLFKEAQGRVIMSTFSSNIHRVYQAIQYGIKYNRKIAVIGRSMEKNLDIARELGYIHLPYQSFIEANEVAKYPDNEVLIVTTGSQGETMSALYRMATDEHRHISIKPNDLVIISAKAIPGNEASVSAVLNFLIKKEAKVAYQEFDNIHVSGHAAQEEQKLMLRLIKPKFFLPVHGEYNHVARHKQTAISCGVPEKNIYLMEDGDQVEVGPAFIKKVGTIKSGKSYVDNQSNLSIDTSIVQQREEVASAGVFAATIFVNKNKQALLESSQFSSLGLVGFKDEKHLIKEIQGGLEMLLKSSNAEILNNPKKLEDHTRNFIRKALFKKFRKYPAIICHAHSF</sequence>
<comment type="function">
    <text evidence="3 4">An RNase that has 5'-3' exoribonuclease and endoribonuclease activity (PubMed:23093592, PubMed:38057323). Degrades 5'-monophosphorylated ssRNA and dsRNA, considerably more active on ssRNA (PubMed:23093592). Association with RhpA significantly increases the dsRNase activity (PubMed:23093592). Degrades RNA substrate with hairpin structures at both ends with low activity, but presence of RhpA significantly increases the activity on this substrate (PubMed:38057323). Stimulates ATPase activity of RNA helicase RhpA (PubMed:23093592). Involved in stabilization of mRNA but apparently not rRNA (PubMed:23093592).</text>
</comment>
<comment type="cofactor">
    <cofactor evidence="1">
        <name>Zn(2+)</name>
        <dbReference type="ChEBI" id="CHEBI:29105"/>
    </cofactor>
    <text evidence="1">Binds up to 2 Zn(2+) ions per subunit. It is not clear if Zn(2+) or Mg(2+) is physiologically important.</text>
</comment>
<comment type="activity regulation">
    <text evidence="4">Catalytic activity is regulated by the balance between homodimers and homotetramers, with homotetramers being the active forms of this enzyme. Acetylation allosterically regulates the homooligomerization state and hence the catalytic activity.</text>
</comment>
<comment type="subunit">
    <text evidence="3 4">Homodimer (PubMed:38057323). Homotetramer; dimer of homodimers (PubMed:38057323). Interacts with RNA helicase RphA, might be a member of a minimal RNA degradosome complex (PubMed:23093592).</text>
</comment>
<comment type="subcellular location">
    <subcellularLocation>
        <location evidence="1 3">Cytoplasm</location>
    </subcellularLocation>
    <text evidence="3">The RNaseJ-RhpA complex co-localizes with 70S ribosomes and polysomes; remains associated with ribosomes in the absence of RhpA.</text>
</comment>
<comment type="domain">
    <text evidence="3 4">The first 132 residues are not conserved outside of Helicobacter. Important for protein stability; a depletion mutant expressing this truncated protein accumulates more ureI mRNA than a depletion mutant able to express low levels of wild-type protein. The truncated protein still stimulates ATPase activity of RNA helicase RhpA (PubMed:23093592). The C-terminal domain is required for homooligomerization (PubMed:38057323).</text>
</comment>
<comment type="PTM">
    <text evidence="4">Acetylated on nine lysine residues. Some of the residues are acetylated by multiple different mechanisms. RimL is partially responsible for the acetylation of Lys-323, Lys-397 and Lys-649. HPB8_1270 homolog is partially responsible for the acetylation of Lys-323, Lys-397, Lys-511 and Lys-649. Acetyl-phosphate-mediated non-enzymatic acetylation pathway takes part in the acetylation of Lys-134, Lys-323, Lys-397, Lys-511 and Lys-649. Acetylation of the remaining residues Lys-140, Lys-337, Lys-547 and Lys-634 occurs by a yet undetermined mechanism. Acetylation on a number of these residues is important for growth regulation and proper cell morphology.</text>
</comment>
<comment type="disruption phenotype">
    <text evidence="3">Essential, it cannot be disrupted. Depletion experiments show only slightly retarded growth with an increase in levels of at least 1 mRNA (ureI). RhpA remains associated with the ribosomes and polysomes.</text>
</comment>
<comment type="similarity">
    <text evidence="1">Belongs to the metallo-beta-lactamase superfamily. RNA-metabolizing metallo-beta-lactamase-like family. Bacterial RNase J subfamily.</text>
</comment>
<keyword id="KW-0002">3D-structure</keyword>
<keyword id="KW-0007">Acetylation</keyword>
<keyword id="KW-0963">Cytoplasm</keyword>
<keyword id="KW-0255">Endonuclease</keyword>
<keyword id="KW-0269">Exonuclease</keyword>
<keyword id="KW-0378">Hydrolase</keyword>
<keyword id="KW-0479">Metal-binding</keyword>
<keyword id="KW-0507">mRNA processing</keyword>
<keyword id="KW-0540">Nuclease</keyword>
<keyword id="KW-0694">RNA-binding</keyword>
<keyword id="KW-0862">Zinc</keyword>
<proteinExistence type="evidence at protein level"/>
<protein>
    <recommendedName>
        <fullName evidence="1 6">Ribonuclease J</fullName>
        <shortName evidence="6">RNase J</shortName>
        <ecNumber evidence="1 4">3.1.-.-</ecNumber>
    </recommendedName>
</protein>
<reference key="1">
    <citation type="journal article" date="2009" name="BMC Genomics">
        <title>Genome sequence analysis of Helicobacter pylori strains associated with gastric ulceration and gastric cancer.</title>
        <authorList>
            <person name="McClain M.S."/>
            <person name="Shaffer C.L."/>
            <person name="Israel D.A."/>
            <person name="Peek R.M. Jr."/>
            <person name="Cover T.L."/>
        </authorList>
    </citation>
    <scope>NUCLEOTIDE SEQUENCE [LARGE SCALE GENOMIC DNA]</scope>
    <source>
        <strain>B128</strain>
    </source>
</reference>
<reference key="2">
    <citation type="journal article" date="2013" name="Nucleic Acids Res.">
        <title>A minimal bacterial RNase J-based degradosome is associated with translating ribosomes.</title>
        <authorList>
            <person name="Redko Y."/>
            <person name="Aubert S."/>
            <person name="Stachowicz A."/>
            <person name="Lenormand P."/>
            <person name="Namane A."/>
            <person name="Darfeuille F."/>
            <person name="Thibonnier M."/>
            <person name="De Reuse H."/>
        </authorList>
    </citation>
    <scope>FUNCTION AS AN RNASE</scope>
    <scope>INTERACTION WITH RHPA</scope>
    <scope>SUBUNIT</scope>
    <scope>SUBCELLULAR LOCATION</scope>
    <scope>DOMAIN</scope>
    <scope>DISRUPTION PHENOTYPE</scope>
    <scope>REGION</scope>
    <source>
        <strain>B128</strain>
    </source>
</reference>
<reference key="3">
    <citation type="journal article" date="2023" name="Nat. Commun.">
        <title>Acetylation regulates the oligomerization state and activity of RNase J, the Helicobacter pylori major ribonuclease.</title>
        <authorList>
            <person name="Tejada-Arranz A."/>
            <person name="Lulla A."/>
            <person name="Bouilloux-Lafont M."/>
            <person name="Turlin E."/>
            <person name="Pei X.Y."/>
            <person name="Douche T."/>
            <person name="Matondo M."/>
            <person name="Williams A.H."/>
            <person name="Raynal B."/>
            <person name="Luisi B.F."/>
            <person name="De Reuse H."/>
        </authorList>
    </citation>
    <scope>STRUCTURE BY ELECTRON MICROSCOPY (4.10 ANGSTROMS) OF 2-691</scope>
    <scope>FUNCTION</scope>
    <scope>CATALYTIC ACTIVITY</scope>
    <scope>ACTIVITY REGULATION</scope>
    <scope>SUBUNIT</scope>
    <scope>DOMAIN</scope>
    <scope>PTM</scope>
    <scope>IDENTIFICATION BY MASS SPECTROMETRY</scope>
    <scope>ACETYLATION AT LYS-134; LYS-140; LYS-323; LYS-337; LYS-397; LYS-511; LYS-547; LYS-634 AND LYS-649</scope>
    <scope>MUTAGENESIS OF LYS-134; LYS-140; ASP-299; LYS-323; LYS-337; LYS-397; LYS-511; LYS-547; GLU-595; GLU-596; LYS-611; GLU-618; LYS-634; LYS-649; GLU-654; LYS-660 AND GLU-663</scope>
    <scope>CIRCULAR DICHROISM ANALYSIS OF WILD-TYPE AND MUTANT ALA-649</scope>
    <source>
        <strain evidence="6">B128</strain>
    </source>
</reference>
<evidence type="ECO:0000255" key="1">
    <source>
        <dbReference type="HAMAP-Rule" id="MF_01491"/>
    </source>
</evidence>
<evidence type="ECO:0000256" key="2">
    <source>
        <dbReference type="SAM" id="MobiDB-lite"/>
    </source>
</evidence>
<evidence type="ECO:0000269" key="3">
    <source>
    </source>
</evidence>
<evidence type="ECO:0000269" key="4">
    <source>
    </source>
</evidence>
<evidence type="ECO:0000303" key="5">
    <source>
    </source>
</evidence>
<evidence type="ECO:0000303" key="6">
    <source>
    </source>
</evidence>
<gene>
    <name evidence="5 6" type="primary">rnj</name>
    <name type="ORF">HPB128_16g80</name>
</gene>
<name>RNJ_HELP8</name>
<accession>B9XZG7</accession>
<feature type="chain" id="PRO_0000430113" description="Ribonuclease J">
    <location>
        <begin position="1"/>
        <end position="691"/>
    </location>
</feature>
<feature type="region of interest" description="Loss of region decreases protein stability, still able to interact with RhpA, but has decreased RNase activity even on ssRNA" evidence="3">
    <location>
        <begin position="1"/>
        <end position="132"/>
    </location>
</feature>
<feature type="region of interest" description="Disordered" evidence="2">
    <location>
        <begin position="1"/>
        <end position="89"/>
    </location>
</feature>
<feature type="compositionally biased region" description="Low complexity" evidence="2">
    <location>
        <begin position="10"/>
        <end position="19"/>
    </location>
</feature>
<feature type="compositionally biased region" description="Basic and acidic residues" evidence="2">
    <location>
        <begin position="41"/>
        <end position="57"/>
    </location>
</feature>
<feature type="compositionally biased region" description="Basic residues" evidence="2">
    <location>
        <begin position="58"/>
        <end position="82"/>
    </location>
</feature>
<feature type="binding site" evidence="1">
    <location>
        <position position="208"/>
    </location>
    <ligand>
        <name>Zn(2+)</name>
        <dbReference type="ChEBI" id="CHEBI:29105"/>
        <label>1</label>
        <note>catalytic</note>
    </ligand>
</feature>
<feature type="binding site" evidence="1">
    <location>
        <position position="210"/>
    </location>
    <ligand>
        <name>Zn(2+)</name>
        <dbReference type="ChEBI" id="CHEBI:29105"/>
        <label>1</label>
        <note>catalytic</note>
    </ligand>
</feature>
<feature type="binding site" evidence="1">
    <location>
        <position position="212"/>
    </location>
    <ligand>
        <name>Zn(2+)</name>
        <dbReference type="ChEBI" id="CHEBI:29105"/>
        <label>2</label>
        <note>catalytic</note>
    </ligand>
</feature>
<feature type="binding site" evidence="1">
    <location>
        <position position="213"/>
    </location>
    <ligand>
        <name>Zn(2+)</name>
        <dbReference type="ChEBI" id="CHEBI:29105"/>
        <label>2</label>
        <note>catalytic</note>
    </ligand>
</feature>
<feature type="binding site" evidence="1">
    <location>
        <position position="277"/>
    </location>
    <ligand>
        <name>Zn(2+)</name>
        <dbReference type="ChEBI" id="CHEBI:29105"/>
        <label>1</label>
        <note>catalytic</note>
    </ligand>
</feature>
<feature type="binding site" evidence="1">
    <location>
        <position position="299"/>
    </location>
    <ligand>
        <name>Zn(2+)</name>
        <dbReference type="ChEBI" id="CHEBI:29105"/>
        <label>1</label>
        <note>catalytic</note>
    </ligand>
</feature>
<feature type="binding site" evidence="1">
    <location>
        <position position="299"/>
    </location>
    <ligand>
        <name>Zn(2+)</name>
        <dbReference type="ChEBI" id="CHEBI:29105"/>
        <label>2</label>
        <note>catalytic</note>
    </ligand>
</feature>
<feature type="binding site" evidence="1">
    <location>
        <begin position="500"/>
        <end position="504"/>
    </location>
    <ligand>
        <name>substrate</name>
    </ligand>
</feature>
<feature type="binding site" evidence="1">
    <location>
        <position position="526"/>
    </location>
    <ligand>
        <name>Zn(2+)</name>
        <dbReference type="ChEBI" id="CHEBI:29105"/>
        <label>2</label>
        <note>catalytic</note>
    </ligand>
</feature>
<feature type="modified residue" description="N6-acetyllysine" evidence="4">
    <location>
        <position position="134"/>
    </location>
</feature>
<feature type="modified residue" description="N6-acetyllysine" evidence="4">
    <location>
        <position position="140"/>
    </location>
</feature>
<feature type="modified residue" description="N6-acetyllysine" evidence="4">
    <location>
        <position position="323"/>
    </location>
</feature>
<feature type="modified residue" description="N6-acetyllysine" evidence="4">
    <location>
        <position position="337"/>
    </location>
</feature>
<feature type="modified residue" description="N6-acetyllysine" evidence="4">
    <location>
        <position position="397"/>
    </location>
</feature>
<feature type="modified residue" description="N6-acetyllysine" evidence="4">
    <location>
        <position position="511"/>
    </location>
</feature>
<feature type="modified residue" description="N6-acetyllysine" evidence="4">
    <location>
        <position position="547"/>
    </location>
</feature>
<feature type="modified residue" description="N6-acetyllysine" evidence="4">
    <location>
        <position position="634"/>
    </location>
</feature>
<feature type="modified residue" description="N6-acetyllysine" evidence="4">
    <location>
        <position position="649"/>
    </location>
</feature>
<feature type="mutagenesis site" description="Altered cell morphology and significant cell lysis and cellular debris." evidence="4">
    <original>K</original>
    <variation>A</variation>
    <location>
        <position position="134"/>
    </location>
</feature>
<feature type="mutagenesis site" description="Altered cell morphology, but no significant cell lysis." evidence="4">
    <original>K</original>
    <variation>A</variation>
    <location>
        <position position="140"/>
    </location>
</feature>
<feature type="mutagenesis site" description="Loss of catalytic activity." evidence="4">
    <original>D</original>
    <variation>A</variation>
    <location>
        <position position="299"/>
    </location>
</feature>
<feature type="mutagenesis site" description="No effect on cell morphology." evidence="4">
    <original>K</original>
    <variation>A</variation>
    <location>
        <position position="323"/>
    </location>
</feature>
<feature type="mutagenesis site" description="Altered cell morphology and significant cell lysis and cellular debris." evidence="4">
    <original>K</original>
    <variation>A</variation>
    <location>
        <position position="337"/>
    </location>
</feature>
<feature type="mutagenesis site" description="Coccoid cell morphology without any cells in a typical helical form. Significant cell lysis and cellular debris." evidence="4">
    <original>K</original>
    <variation>A</variation>
    <location>
        <position position="397"/>
    </location>
</feature>
<feature type="mutagenesis site" description="Altered cell morphology and significant cell lysis and cellular debris." evidence="4">
    <original>K</original>
    <variation>A</variation>
    <location>
        <position position="511"/>
    </location>
</feature>
<feature type="mutagenesis site" description="No effect on cell morphology." evidence="4">
    <original>K</original>
    <variation>A</variation>
    <location>
        <position position="547"/>
    </location>
</feature>
<feature type="mutagenesis site" description="No effect on homooligomerization." evidence="4">
    <original>E</original>
    <variation>A</variation>
    <location>
        <position position="595"/>
    </location>
</feature>
<feature type="mutagenesis site" description="No effect on homooligomerization." evidence="4">
    <original>E</original>
    <variation>A</variation>
    <location>
        <position position="596"/>
    </location>
</feature>
<feature type="mutagenesis site" description="No effect on homooligomerization." evidence="4">
    <original>K</original>
    <variation>A</variation>
    <location>
        <position position="611"/>
    </location>
</feature>
<feature type="mutagenesis site" description="Significantly decreased homooligomerization." evidence="4">
    <original>E</original>
    <variation>A</variation>
    <location>
        <position position="618"/>
    </location>
</feature>
<feature type="mutagenesis site" description="No effect on homooligomerization. Slight effect on cell morphology." evidence="4">
    <original>K</original>
    <variation>A</variation>
    <location>
        <position position="634"/>
    </location>
</feature>
<feature type="mutagenesis site" description="Loss of acetylation and positive charge. Loss of homodimerization. Exists solely as a homotetramer in vitro. No effect on protein folding as secondary structures remain as in wild-type. Significantly increased exoribonuclease activity. No effect on endoribonuclease activity on RNA substrate with hairpin structures at both ends in the presence or absence of RhpA. No effect on cell morphology." evidence="4">
    <original>K</original>
    <variation>A</variation>
    <location>
        <position position="649"/>
    </location>
</feature>
<feature type="mutagenesis site" description="Acetylated mimic with no positive charge. Has a significant increase in homotetramerization over homodimerization compared to wild-type. Decreased exoribonuclease activity. Significantly decreased endoribonuclease activity on RNA substrate with hairpin structures at both ends in the presence or absence of RhpA." evidence="4">
    <original>K</original>
    <variation>Q</variation>
    <location>
        <position position="649"/>
    </location>
</feature>
<feature type="mutagenesis site" description="Non-acetylated mimic with a positive charge. No effect on homooligomerization as forms both homodimers and homotetramers as wild-type. Significantly decreased exoribonuclease activity. Has significant endoribonuclease activity on RNA substrate with hairpin structures at both ends in the presence of RhpA, but not in its absence." evidence="4">
    <original>K</original>
    <variation>R</variation>
    <location>
        <position position="649"/>
    </location>
</feature>
<feature type="mutagenesis site" description="Significantly decreased homooligomerization." evidence="4">
    <original>E</original>
    <variation>A</variation>
    <location>
        <position position="654"/>
    </location>
</feature>
<feature type="mutagenesis site" description="Significantly decreased homooligomerization." evidence="4">
    <original>K</original>
    <variation>A</variation>
    <location>
        <position position="660"/>
    </location>
</feature>
<feature type="mutagenesis site" description="Significantly decreased homooligomerization." evidence="4">
    <original>E</original>
    <variation>A</variation>
    <location>
        <position position="663"/>
    </location>
</feature>